<proteinExistence type="inferred from homology"/>
<organism>
    <name type="scientific">Shouchella clausii (strain KSM-K16)</name>
    <name type="common">Alkalihalobacillus clausii</name>
    <dbReference type="NCBI Taxonomy" id="66692"/>
    <lineage>
        <taxon>Bacteria</taxon>
        <taxon>Bacillati</taxon>
        <taxon>Bacillota</taxon>
        <taxon>Bacilli</taxon>
        <taxon>Bacillales</taxon>
        <taxon>Bacillaceae</taxon>
        <taxon>Shouchella</taxon>
    </lineage>
</organism>
<gene>
    <name evidence="1" type="primary">glmU</name>
    <name type="ordered locus">ABC0078</name>
</gene>
<reference key="1">
    <citation type="submission" date="2003-10" db="EMBL/GenBank/DDBJ databases">
        <title>The complete genome sequence of the alkaliphilic Bacillus clausii KSM-K16.</title>
        <authorList>
            <person name="Takaki Y."/>
            <person name="Kageyama Y."/>
            <person name="Shimamura S."/>
            <person name="Suzuki H."/>
            <person name="Nishi S."/>
            <person name="Hatada Y."/>
            <person name="Kawai S."/>
            <person name="Ito S."/>
            <person name="Horikoshi K."/>
        </authorList>
    </citation>
    <scope>NUCLEOTIDE SEQUENCE [LARGE SCALE GENOMIC DNA]</scope>
    <source>
        <strain>KSM-K16</strain>
    </source>
</reference>
<dbReference type="EC" id="2.7.7.23" evidence="1"/>
<dbReference type="EC" id="2.3.1.157" evidence="1"/>
<dbReference type="EMBL" id="AP006627">
    <property type="protein sequence ID" value="BAD62621.1"/>
    <property type="molecule type" value="Genomic_DNA"/>
</dbReference>
<dbReference type="RefSeq" id="WP_011244942.1">
    <property type="nucleotide sequence ID" value="NC_006582.1"/>
</dbReference>
<dbReference type="SMR" id="Q5WAD9"/>
<dbReference type="STRING" id="66692.ABC0078"/>
<dbReference type="KEGG" id="bcl:ABC0078"/>
<dbReference type="eggNOG" id="COG1207">
    <property type="taxonomic scope" value="Bacteria"/>
</dbReference>
<dbReference type="HOGENOM" id="CLU_029499_15_2_9"/>
<dbReference type="OrthoDB" id="9775031at2"/>
<dbReference type="UniPathway" id="UPA00113">
    <property type="reaction ID" value="UER00532"/>
</dbReference>
<dbReference type="UniPathway" id="UPA00113">
    <property type="reaction ID" value="UER00533"/>
</dbReference>
<dbReference type="UniPathway" id="UPA00973"/>
<dbReference type="Proteomes" id="UP000001168">
    <property type="component" value="Chromosome"/>
</dbReference>
<dbReference type="GO" id="GO:0005737">
    <property type="term" value="C:cytoplasm"/>
    <property type="evidence" value="ECO:0007669"/>
    <property type="project" value="UniProtKB-SubCell"/>
</dbReference>
<dbReference type="GO" id="GO:0016020">
    <property type="term" value="C:membrane"/>
    <property type="evidence" value="ECO:0007669"/>
    <property type="project" value="GOC"/>
</dbReference>
<dbReference type="GO" id="GO:0019134">
    <property type="term" value="F:glucosamine-1-phosphate N-acetyltransferase activity"/>
    <property type="evidence" value="ECO:0007669"/>
    <property type="project" value="UniProtKB-UniRule"/>
</dbReference>
<dbReference type="GO" id="GO:0000287">
    <property type="term" value="F:magnesium ion binding"/>
    <property type="evidence" value="ECO:0007669"/>
    <property type="project" value="UniProtKB-UniRule"/>
</dbReference>
<dbReference type="GO" id="GO:0003977">
    <property type="term" value="F:UDP-N-acetylglucosamine diphosphorylase activity"/>
    <property type="evidence" value="ECO:0007669"/>
    <property type="project" value="UniProtKB-UniRule"/>
</dbReference>
<dbReference type="GO" id="GO:0000902">
    <property type="term" value="P:cell morphogenesis"/>
    <property type="evidence" value="ECO:0007669"/>
    <property type="project" value="UniProtKB-UniRule"/>
</dbReference>
<dbReference type="GO" id="GO:0071555">
    <property type="term" value="P:cell wall organization"/>
    <property type="evidence" value="ECO:0007669"/>
    <property type="project" value="UniProtKB-KW"/>
</dbReference>
<dbReference type="GO" id="GO:0009245">
    <property type="term" value="P:lipid A biosynthetic process"/>
    <property type="evidence" value="ECO:0007669"/>
    <property type="project" value="UniProtKB-UniRule"/>
</dbReference>
<dbReference type="GO" id="GO:0009252">
    <property type="term" value="P:peptidoglycan biosynthetic process"/>
    <property type="evidence" value="ECO:0007669"/>
    <property type="project" value="UniProtKB-UniRule"/>
</dbReference>
<dbReference type="GO" id="GO:0008360">
    <property type="term" value="P:regulation of cell shape"/>
    <property type="evidence" value="ECO:0007669"/>
    <property type="project" value="UniProtKB-KW"/>
</dbReference>
<dbReference type="GO" id="GO:0006048">
    <property type="term" value="P:UDP-N-acetylglucosamine biosynthetic process"/>
    <property type="evidence" value="ECO:0007669"/>
    <property type="project" value="UniProtKB-UniPathway"/>
</dbReference>
<dbReference type="CDD" id="cd02540">
    <property type="entry name" value="GT2_GlmU_N_bac"/>
    <property type="match status" value="1"/>
</dbReference>
<dbReference type="CDD" id="cd03353">
    <property type="entry name" value="LbH_GlmU_C"/>
    <property type="match status" value="1"/>
</dbReference>
<dbReference type="Gene3D" id="2.160.10.10">
    <property type="entry name" value="Hexapeptide repeat proteins"/>
    <property type="match status" value="1"/>
</dbReference>
<dbReference type="Gene3D" id="3.90.550.10">
    <property type="entry name" value="Spore Coat Polysaccharide Biosynthesis Protein SpsA, Chain A"/>
    <property type="match status" value="1"/>
</dbReference>
<dbReference type="HAMAP" id="MF_01631">
    <property type="entry name" value="GlmU"/>
    <property type="match status" value="1"/>
</dbReference>
<dbReference type="InterPro" id="IPR005882">
    <property type="entry name" value="Bifunctional_GlmU"/>
</dbReference>
<dbReference type="InterPro" id="IPR050065">
    <property type="entry name" value="GlmU-like"/>
</dbReference>
<dbReference type="InterPro" id="IPR038009">
    <property type="entry name" value="GlmU_C_LbH"/>
</dbReference>
<dbReference type="InterPro" id="IPR001451">
    <property type="entry name" value="Hexapep"/>
</dbReference>
<dbReference type="InterPro" id="IPR018357">
    <property type="entry name" value="Hexapep_transf_CS"/>
</dbReference>
<dbReference type="InterPro" id="IPR005835">
    <property type="entry name" value="NTP_transferase_dom"/>
</dbReference>
<dbReference type="InterPro" id="IPR029044">
    <property type="entry name" value="Nucleotide-diphossugar_trans"/>
</dbReference>
<dbReference type="InterPro" id="IPR011004">
    <property type="entry name" value="Trimer_LpxA-like_sf"/>
</dbReference>
<dbReference type="NCBIfam" id="TIGR01173">
    <property type="entry name" value="glmU"/>
    <property type="match status" value="1"/>
</dbReference>
<dbReference type="NCBIfam" id="NF010934">
    <property type="entry name" value="PRK14354.1"/>
    <property type="match status" value="1"/>
</dbReference>
<dbReference type="PANTHER" id="PTHR43584:SF3">
    <property type="entry name" value="BIFUNCTIONAL PROTEIN GLMU"/>
    <property type="match status" value="1"/>
</dbReference>
<dbReference type="PANTHER" id="PTHR43584">
    <property type="entry name" value="NUCLEOTIDYL TRANSFERASE"/>
    <property type="match status" value="1"/>
</dbReference>
<dbReference type="Pfam" id="PF00132">
    <property type="entry name" value="Hexapep"/>
    <property type="match status" value="3"/>
</dbReference>
<dbReference type="Pfam" id="PF00483">
    <property type="entry name" value="NTP_transferase"/>
    <property type="match status" value="1"/>
</dbReference>
<dbReference type="SUPFAM" id="SSF53448">
    <property type="entry name" value="Nucleotide-diphospho-sugar transferases"/>
    <property type="match status" value="1"/>
</dbReference>
<dbReference type="SUPFAM" id="SSF51161">
    <property type="entry name" value="Trimeric LpxA-like enzymes"/>
    <property type="match status" value="1"/>
</dbReference>
<dbReference type="PROSITE" id="PS00101">
    <property type="entry name" value="HEXAPEP_TRANSFERASES"/>
    <property type="match status" value="1"/>
</dbReference>
<comment type="function">
    <text evidence="1">Catalyzes the last two sequential reactions in the de novo biosynthetic pathway for UDP-N-acetylglucosamine (UDP-GlcNAc). The C-terminal domain catalyzes the transfer of acetyl group from acetyl coenzyme A to glucosamine-1-phosphate (GlcN-1-P) to produce N-acetylglucosamine-1-phosphate (GlcNAc-1-P), which is converted into UDP-GlcNAc by the transfer of uridine 5-monophosphate (from uridine 5-triphosphate), a reaction catalyzed by the N-terminal domain.</text>
</comment>
<comment type="catalytic activity">
    <reaction evidence="1">
        <text>alpha-D-glucosamine 1-phosphate + acetyl-CoA = N-acetyl-alpha-D-glucosamine 1-phosphate + CoA + H(+)</text>
        <dbReference type="Rhea" id="RHEA:13725"/>
        <dbReference type="ChEBI" id="CHEBI:15378"/>
        <dbReference type="ChEBI" id="CHEBI:57287"/>
        <dbReference type="ChEBI" id="CHEBI:57288"/>
        <dbReference type="ChEBI" id="CHEBI:57776"/>
        <dbReference type="ChEBI" id="CHEBI:58516"/>
        <dbReference type="EC" id="2.3.1.157"/>
    </reaction>
</comment>
<comment type="catalytic activity">
    <reaction evidence="1">
        <text>N-acetyl-alpha-D-glucosamine 1-phosphate + UTP + H(+) = UDP-N-acetyl-alpha-D-glucosamine + diphosphate</text>
        <dbReference type="Rhea" id="RHEA:13509"/>
        <dbReference type="ChEBI" id="CHEBI:15378"/>
        <dbReference type="ChEBI" id="CHEBI:33019"/>
        <dbReference type="ChEBI" id="CHEBI:46398"/>
        <dbReference type="ChEBI" id="CHEBI:57705"/>
        <dbReference type="ChEBI" id="CHEBI:57776"/>
        <dbReference type="EC" id="2.7.7.23"/>
    </reaction>
</comment>
<comment type="cofactor">
    <cofactor evidence="1">
        <name>Mg(2+)</name>
        <dbReference type="ChEBI" id="CHEBI:18420"/>
    </cofactor>
    <text evidence="1">Binds 1 Mg(2+) ion per subunit.</text>
</comment>
<comment type="pathway">
    <text evidence="1">Nucleotide-sugar biosynthesis; UDP-N-acetyl-alpha-D-glucosamine biosynthesis; N-acetyl-alpha-D-glucosamine 1-phosphate from alpha-D-glucosamine 6-phosphate (route II): step 2/2.</text>
</comment>
<comment type="pathway">
    <text evidence="1">Nucleotide-sugar biosynthesis; UDP-N-acetyl-alpha-D-glucosamine biosynthesis; UDP-N-acetyl-alpha-D-glucosamine from N-acetyl-alpha-D-glucosamine 1-phosphate: step 1/1.</text>
</comment>
<comment type="pathway">
    <text evidence="1">Bacterial outer membrane biogenesis; LPS lipid A biosynthesis.</text>
</comment>
<comment type="subunit">
    <text evidence="1">Homotrimer.</text>
</comment>
<comment type="subcellular location">
    <subcellularLocation>
        <location evidence="1">Cytoplasm</location>
    </subcellularLocation>
</comment>
<comment type="similarity">
    <text evidence="1">In the N-terminal section; belongs to the N-acetylglucosamine-1-phosphate uridyltransferase family.</text>
</comment>
<comment type="similarity">
    <text evidence="1">In the C-terminal section; belongs to the transferase hexapeptide repeat family.</text>
</comment>
<name>GLMU_SHOC1</name>
<accession>Q5WAD9</accession>
<keyword id="KW-0012">Acyltransferase</keyword>
<keyword id="KW-0133">Cell shape</keyword>
<keyword id="KW-0961">Cell wall biogenesis/degradation</keyword>
<keyword id="KW-0963">Cytoplasm</keyword>
<keyword id="KW-0460">Magnesium</keyword>
<keyword id="KW-0479">Metal-binding</keyword>
<keyword id="KW-0511">Multifunctional enzyme</keyword>
<keyword id="KW-0548">Nucleotidyltransferase</keyword>
<keyword id="KW-0573">Peptidoglycan synthesis</keyword>
<keyword id="KW-1185">Reference proteome</keyword>
<keyword id="KW-0677">Repeat</keyword>
<keyword id="KW-0808">Transferase</keyword>
<feature type="chain" id="PRO_0000233730" description="Bifunctional protein GlmU">
    <location>
        <begin position="1"/>
        <end position="454"/>
    </location>
</feature>
<feature type="region of interest" description="Pyrophosphorylase" evidence="1">
    <location>
        <begin position="1"/>
        <end position="230"/>
    </location>
</feature>
<feature type="region of interest" description="Linker" evidence="1">
    <location>
        <begin position="231"/>
        <end position="251"/>
    </location>
</feature>
<feature type="region of interest" description="N-acetyltransferase" evidence="1">
    <location>
        <begin position="252"/>
        <end position="454"/>
    </location>
</feature>
<feature type="active site" description="Proton acceptor" evidence="1">
    <location>
        <position position="363"/>
    </location>
</feature>
<feature type="binding site" evidence="1">
    <location>
        <begin position="9"/>
        <end position="12"/>
    </location>
    <ligand>
        <name>UDP-N-acetyl-alpha-D-glucosamine</name>
        <dbReference type="ChEBI" id="CHEBI:57705"/>
    </ligand>
</feature>
<feature type="binding site" evidence="1">
    <location>
        <position position="23"/>
    </location>
    <ligand>
        <name>UDP-N-acetyl-alpha-D-glucosamine</name>
        <dbReference type="ChEBI" id="CHEBI:57705"/>
    </ligand>
</feature>
<feature type="binding site" evidence="1">
    <location>
        <position position="73"/>
    </location>
    <ligand>
        <name>UDP-N-acetyl-alpha-D-glucosamine</name>
        <dbReference type="ChEBI" id="CHEBI:57705"/>
    </ligand>
</feature>
<feature type="binding site" evidence="1">
    <location>
        <begin position="78"/>
        <end position="79"/>
    </location>
    <ligand>
        <name>UDP-N-acetyl-alpha-D-glucosamine</name>
        <dbReference type="ChEBI" id="CHEBI:57705"/>
    </ligand>
</feature>
<feature type="binding site" evidence="1">
    <location>
        <position position="103"/>
    </location>
    <ligand>
        <name>Mg(2+)</name>
        <dbReference type="ChEBI" id="CHEBI:18420"/>
    </ligand>
</feature>
<feature type="binding site" evidence="1">
    <location>
        <position position="140"/>
    </location>
    <ligand>
        <name>UDP-N-acetyl-alpha-D-glucosamine</name>
        <dbReference type="ChEBI" id="CHEBI:57705"/>
    </ligand>
</feature>
<feature type="binding site" evidence="1">
    <location>
        <position position="155"/>
    </location>
    <ligand>
        <name>UDP-N-acetyl-alpha-D-glucosamine</name>
        <dbReference type="ChEBI" id="CHEBI:57705"/>
    </ligand>
</feature>
<feature type="binding site" evidence="1">
    <location>
        <position position="170"/>
    </location>
    <ligand>
        <name>UDP-N-acetyl-alpha-D-glucosamine</name>
        <dbReference type="ChEBI" id="CHEBI:57705"/>
    </ligand>
</feature>
<feature type="binding site" evidence="1">
    <location>
        <position position="228"/>
    </location>
    <ligand>
        <name>Mg(2+)</name>
        <dbReference type="ChEBI" id="CHEBI:18420"/>
    </ligand>
</feature>
<feature type="binding site" evidence="1">
    <location>
        <position position="228"/>
    </location>
    <ligand>
        <name>UDP-N-acetyl-alpha-D-glucosamine</name>
        <dbReference type="ChEBI" id="CHEBI:57705"/>
    </ligand>
</feature>
<feature type="binding site" evidence="1">
    <location>
        <position position="333"/>
    </location>
    <ligand>
        <name>UDP-N-acetyl-alpha-D-glucosamine</name>
        <dbReference type="ChEBI" id="CHEBI:57705"/>
    </ligand>
</feature>
<feature type="binding site" evidence="1">
    <location>
        <position position="351"/>
    </location>
    <ligand>
        <name>UDP-N-acetyl-alpha-D-glucosamine</name>
        <dbReference type="ChEBI" id="CHEBI:57705"/>
    </ligand>
</feature>
<feature type="binding site" evidence="1">
    <location>
        <position position="366"/>
    </location>
    <ligand>
        <name>UDP-N-acetyl-alpha-D-glucosamine</name>
        <dbReference type="ChEBI" id="CHEBI:57705"/>
    </ligand>
</feature>
<feature type="binding site" evidence="1">
    <location>
        <position position="377"/>
    </location>
    <ligand>
        <name>UDP-N-acetyl-alpha-D-glucosamine</name>
        <dbReference type="ChEBI" id="CHEBI:57705"/>
    </ligand>
</feature>
<feature type="binding site" evidence="1">
    <location>
        <begin position="386"/>
        <end position="387"/>
    </location>
    <ligand>
        <name>acetyl-CoA</name>
        <dbReference type="ChEBI" id="CHEBI:57288"/>
    </ligand>
</feature>
<feature type="binding site" evidence="1">
    <location>
        <position position="405"/>
    </location>
    <ligand>
        <name>acetyl-CoA</name>
        <dbReference type="ChEBI" id="CHEBI:57288"/>
    </ligand>
</feature>
<feature type="binding site" evidence="1">
    <location>
        <position position="423"/>
    </location>
    <ligand>
        <name>acetyl-CoA</name>
        <dbReference type="ChEBI" id="CHEBI:57288"/>
    </ligand>
</feature>
<feature type="binding site" evidence="1">
    <location>
        <position position="440"/>
    </location>
    <ligand>
        <name>acetyl-CoA</name>
        <dbReference type="ChEBI" id="CHEBI:57288"/>
    </ligand>
</feature>
<evidence type="ECO:0000255" key="1">
    <source>
        <dbReference type="HAMAP-Rule" id="MF_01631"/>
    </source>
</evidence>
<sequence length="454" mass="48169">MSGRFAVILAAGQGTRMKSKLYKVLHPVCGKPMVEHVVDQVSKLEFDKTAVIVGHGAEEVKKTLTEKIEFVMQPEQLGTGHAVKCAEHLLASQKGTTVVLCGDTPLITAATIKKLMDTHEANGAKATVLTAHAPDPTGYGRVIRGNQGQVEKIVEHKDASVDELAIAEVNTGTYCFDNEALFEALAEVKNENAQGEYYLPDVIGILRQKGETISAYQTDSLSETMGVNDRVALSQAEAAMRKRINEEWMRQGVTIIDPQTTYISADASIGQDTVLYPNTSIKGPSVIGEDCVIESGTEIASATLGRGVHVCSSVISNSVVADGSSIGPFAHIRPGSDVGENVRVGNFVELKKASIGTGSKVSHLTYVGDAEVGSDVNVGCGVVTVNYDGKNKHKTIIKDGAFVGSGSNLIAPVEIGERAFVAAGSTITDDVPSQALSIARSRQVNKDNYVKKDV</sequence>
<protein>
    <recommendedName>
        <fullName evidence="1">Bifunctional protein GlmU</fullName>
    </recommendedName>
    <domain>
        <recommendedName>
            <fullName evidence="1">UDP-N-acetylglucosamine pyrophosphorylase</fullName>
            <ecNumber evidence="1">2.7.7.23</ecNumber>
        </recommendedName>
        <alternativeName>
            <fullName evidence="1">N-acetylglucosamine-1-phosphate uridyltransferase</fullName>
        </alternativeName>
    </domain>
    <domain>
        <recommendedName>
            <fullName evidence="1">Glucosamine-1-phosphate N-acetyltransferase</fullName>
            <ecNumber evidence="1">2.3.1.157</ecNumber>
        </recommendedName>
    </domain>
</protein>